<dbReference type="EMBL" id="CP000260">
    <property type="protein sequence ID" value="ABF33371.1"/>
    <property type="molecule type" value="Genomic_DNA"/>
</dbReference>
<dbReference type="KEGG" id="sph:MGAS10270_Spy0306"/>
<dbReference type="HOGENOM" id="CLU_144811_5_2_9"/>
<dbReference type="Proteomes" id="UP000002436">
    <property type="component" value="Chromosome"/>
</dbReference>
<dbReference type="GO" id="GO:0005886">
    <property type="term" value="C:plasma membrane"/>
    <property type="evidence" value="ECO:0007669"/>
    <property type="project" value="UniProtKB-SubCell"/>
</dbReference>
<dbReference type="HAMAP" id="MF_00386">
    <property type="entry name" value="UPF0161_YidD"/>
    <property type="match status" value="1"/>
</dbReference>
<dbReference type="InterPro" id="IPR002696">
    <property type="entry name" value="Membr_insert_effic_factor_YidD"/>
</dbReference>
<dbReference type="NCBIfam" id="TIGR00278">
    <property type="entry name" value="membrane protein insertion efficiency factor YidD"/>
    <property type="match status" value="1"/>
</dbReference>
<dbReference type="PANTHER" id="PTHR33383">
    <property type="entry name" value="MEMBRANE PROTEIN INSERTION EFFICIENCY FACTOR-RELATED"/>
    <property type="match status" value="1"/>
</dbReference>
<dbReference type="PANTHER" id="PTHR33383:SF1">
    <property type="entry name" value="MEMBRANE PROTEIN INSERTION EFFICIENCY FACTOR-RELATED"/>
    <property type="match status" value="1"/>
</dbReference>
<dbReference type="Pfam" id="PF01809">
    <property type="entry name" value="YidD"/>
    <property type="match status" value="1"/>
</dbReference>
<dbReference type="SMART" id="SM01234">
    <property type="entry name" value="Haemolytic"/>
    <property type="match status" value="1"/>
</dbReference>
<gene>
    <name type="ordered locus">MGAS10270_Spy0306</name>
</gene>
<sequence>MMKKLLIVSVKAYQKYISPLSPPSCRYKPTCSAYMLTAIEKHGTKGILMGIARILRCHPFVAGGVDPVPEDFSLMRNKNTSKNAEKA</sequence>
<accession>Q1JIF2</accession>
<evidence type="ECO:0000255" key="1">
    <source>
        <dbReference type="HAMAP-Rule" id="MF_00386"/>
    </source>
</evidence>
<proteinExistence type="inferred from homology"/>
<keyword id="KW-1003">Cell membrane</keyword>
<keyword id="KW-0472">Membrane</keyword>
<name>YIDD_STRPD</name>
<reference key="1">
    <citation type="journal article" date="2006" name="Proc. Natl. Acad. Sci. U.S.A.">
        <title>Molecular genetic anatomy of inter- and intraserotype variation in the human bacterial pathogen group A Streptococcus.</title>
        <authorList>
            <person name="Beres S.B."/>
            <person name="Richter E.W."/>
            <person name="Nagiec M.J."/>
            <person name="Sumby P."/>
            <person name="Porcella S.F."/>
            <person name="DeLeo F.R."/>
            <person name="Musser J.M."/>
        </authorList>
    </citation>
    <scope>NUCLEOTIDE SEQUENCE [LARGE SCALE GENOMIC DNA]</scope>
    <source>
        <strain>MGAS10270</strain>
    </source>
</reference>
<comment type="function">
    <text evidence="1">Could be involved in insertion of integral membrane proteins into the membrane.</text>
</comment>
<comment type="subcellular location">
    <subcellularLocation>
        <location evidence="1">Cell membrane</location>
        <topology evidence="1">Peripheral membrane protein</topology>
        <orientation evidence="1">Cytoplasmic side</orientation>
    </subcellularLocation>
</comment>
<comment type="similarity">
    <text evidence="1">Belongs to the UPF0161 family.</text>
</comment>
<feature type="chain" id="PRO_0000253179" description="Putative membrane protein insertion efficiency factor">
    <location>
        <begin position="1"/>
        <end position="87"/>
    </location>
</feature>
<protein>
    <recommendedName>
        <fullName evidence="1">Putative membrane protein insertion efficiency factor</fullName>
    </recommendedName>
</protein>
<organism>
    <name type="scientific">Streptococcus pyogenes serotype M2 (strain MGAS10270)</name>
    <dbReference type="NCBI Taxonomy" id="370552"/>
    <lineage>
        <taxon>Bacteria</taxon>
        <taxon>Bacillati</taxon>
        <taxon>Bacillota</taxon>
        <taxon>Bacilli</taxon>
        <taxon>Lactobacillales</taxon>
        <taxon>Streptococcaceae</taxon>
        <taxon>Streptococcus</taxon>
    </lineage>
</organism>